<feature type="chain" id="PRO_0000183732" description="Cytochrome c oxidase subunit 3">
    <location>
        <begin position="1"/>
        <end position="262"/>
    </location>
</feature>
<feature type="transmembrane region" description="Helical" evidence="2">
    <location>
        <begin position="39"/>
        <end position="59"/>
    </location>
</feature>
<feature type="transmembrane region" description="Helical" evidence="2">
    <location>
        <begin position="83"/>
        <end position="103"/>
    </location>
</feature>
<feature type="transmembrane region" description="Helical" evidence="2">
    <location>
        <begin position="120"/>
        <end position="140"/>
    </location>
</feature>
<feature type="transmembrane region" description="Helical" evidence="2">
    <location>
        <begin position="163"/>
        <end position="183"/>
    </location>
</feature>
<feature type="transmembrane region" description="Helical" evidence="2">
    <location>
        <begin position="201"/>
        <end position="221"/>
    </location>
</feature>
<feature type="transmembrane region" description="Helical" evidence="2">
    <location>
        <begin position="240"/>
        <end position="260"/>
    </location>
</feature>
<dbReference type="EC" id="7.1.1.9"/>
<dbReference type="EMBL" id="L20934">
    <property type="protein sequence ID" value="AAD12195.1"/>
    <property type="molecule type" value="Genomic_DNA"/>
</dbReference>
<dbReference type="PIR" id="T09805">
    <property type="entry name" value="T09805"/>
</dbReference>
<dbReference type="RefSeq" id="NP_008074.1">
    <property type="nucleotide sequence ID" value="NC_002084.1"/>
</dbReference>
<dbReference type="SMR" id="P34842"/>
<dbReference type="FunCoup" id="P34842">
    <property type="interactions" value="221"/>
</dbReference>
<dbReference type="STRING" id="7165.P34842"/>
<dbReference type="PaxDb" id="7165-AGAP028371-PA"/>
<dbReference type="EnsemblMetazoa" id="AGAP028371-RA">
    <property type="protein sequence ID" value="AGAP028371-PA"/>
    <property type="gene ID" value="AGAP028371"/>
</dbReference>
<dbReference type="VEuPathDB" id="VectorBase:AGAMI1_012089"/>
<dbReference type="VEuPathDB" id="VectorBase:AGAP028371"/>
<dbReference type="eggNOG" id="KOG4664">
    <property type="taxonomic scope" value="Eukaryota"/>
</dbReference>
<dbReference type="HOGENOM" id="CLU_044071_0_0_1"/>
<dbReference type="InParanoid" id="P34842"/>
<dbReference type="OMA" id="SIYWWGS"/>
<dbReference type="Proteomes" id="UP000007062">
    <property type="component" value="Mitochondrion"/>
</dbReference>
<dbReference type="GO" id="GO:0005743">
    <property type="term" value="C:mitochondrial inner membrane"/>
    <property type="evidence" value="ECO:0007669"/>
    <property type="project" value="UniProtKB-SubCell"/>
</dbReference>
<dbReference type="GO" id="GO:0005739">
    <property type="term" value="C:mitochondrion"/>
    <property type="evidence" value="ECO:0000318"/>
    <property type="project" value="GO_Central"/>
</dbReference>
<dbReference type="GO" id="GO:0004129">
    <property type="term" value="F:cytochrome-c oxidase activity"/>
    <property type="evidence" value="ECO:0007669"/>
    <property type="project" value="UniProtKB-EC"/>
</dbReference>
<dbReference type="GO" id="GO:0006123">
    <property type="term" value="P:mitochondrial electron transport, cytochrome c to oxygen"/>
    <property type="evidence" value="ECO:0000318"/>
    <property type="project" value="GO_Central"/>
</dbReference>
<dbReference type="CDD" id="cd01665">
    <property type="entry name" value="Cyt_c_Oxidase_III"/>
    <property type="match status" value="1"/>
</dbReference>
<dbReference type="FunFam" id="1.10.287.70:FF:000048">
    <property type="entry name" value="Cytochrome c oxidase subunit 3"/>
    <property type="match status" value="1"/>
</dbReference>
<dbReference type="FunFam" id="1.20.120.80:FF:000002">
    <property type="entry name" value="Cytochrome c oxidase subunit 3"/>
    <property type="match status" value="1"/>
</dbReference>
<dbReference type="Gene3D" id="1.10.287.70">
    <property type="match status" value="1"/>
</dbReference>
<dbReference type="Gene3D" id="1.20.120.80">
    <property type="entry name" value="Cytochrome c oxidase, subunit III, four-helix bundle"/>
    <property type="match status" value="1"/>
</dbReference>
<dbReference type="InterPro" id="IPR024791">
    <property type="entry name" value="Cyt_c/ubiquinol_Oxase_su3"/>
</dbReference>
<dbReference type="InterPro" id="IPR033945">
    <property type="entry name" value="Cyt_c_oxase_su3_dom"/>
</dbReference>
<dbReference type="InterPro" id="IPR000298">
    <property type="entry name" value="Cyt_c_oxidase-like_su3"/>
</dbReference>
<dbReference type="InterPro" id="IPR035973">
    <property type="entry name" value="Cyt_c_oxidase_su3-like_sf"/>
</dbReference>
<dbReference type="InterPro" id="IPR013833">
    <property type="entry name" value="Cyt_c_oxidase_su3_a-hlx"/>
</dbReference>
<dbReference type="PANTHER" id="PTHR11403:SF7">
    <property type="entry name" value="CYTOCHROME C OXIDASE SUBUNIT 3"/>
    <property type="match status" value="1"/>
</dbReference>
<dbReference type="PANTHER" id="PTHR11403">
    <property type="entry name" value="CYTOCHROME C OXIDASE SUBUNIT III"/>
    <property type="match status" value="1"/>
</dbReference>
<dbReference type="Pfam" id="PF00510">
    <property type="entry name" value="COX3"/>
    <property type="match status" value="1"/>
</dbReference>
<dbReference type="SUPFAM" id="SSF81452">
    <property type="entry name" value="Cytochrome c oxidase subunit III-like"/>
    <property type="match status" value="1"/>
</dbReference>
<dbReference type="PROSITE" id="PS50253">
    <property type="entry name" value="COX3"/>
    <property type="match status" value="1"/>
</dbReference>
<organism>
    <name type="scientific">Anopheles gambiae</name>
    <name type="common">African malaria mosquito</name>
    <dbReference type="NCBI Taxonomy" id="7165"/>
    <lineage>
        <taxon>Eukaryota</taxon>
        <taxon>Metazoa</taxon>
        <taxon>Ecdysozoa</taxon>
        <taxon>Arthropoda</taxon>
        <taxon>Hexapoda</taxon>
        <taxon>Insecta</taxon>
        <taxon>Pterygota</taxon>
        <taxon>Neoptera</taxon>
        <taxon>Endopterygota</taxon>
        <taxon>Diptera</taxon>
        <taxon>Nematocera</taxon>
        <taxon>Culicoidea</taxon>
        <taxon>Culicidae</taxon>
        <taxon>Anophelinae</taxon>
        <taxon>Anopheles</taxon>
    </lineage>
</organism>
<proteinExistence type="inferred from homology"/>
<name>COX3_ANOGA</name>
<keyword id="KW-0472">Membrane</keyword>
<keyword id="KW-0496">Mitochondrion</keyword>
<keyword id="KW-0999">Mitochondrion inner membrane</keyword>
<keyword id="KW-1185">Reference proteome</keyword>
<keyword id="KW-1278">Translocase</keyword>
<keyword id="KW-0812">Transmembrane</keyword>
<keyword id="KW-1133">Transmembrane helix</keyword>
<protein>
    <recommendedName>
        <fullName>Cytochrome c oxidase subunit 3</fullName>
        <ecNumber>7.1.1.9</ecNumber>
    </recommendedName>
    <alternativeName>
        <fullName>Cytochrome c oxidase polypeptide III</fullName>
    </alternativeName>
</protein>
<accession>P34842</accession>
<reference key="1">
    <citation type="journal article" date="1993" name="Insect Mol. Biol.">
        <title>The mitochondrial genome of the mosquito Anopheles gambiae: DNA sequence, genome organization, and comparisons with mitochondrial sequences of other insects.</title>
        <authorList>
            <person name="Beard C.B."/>
            <person name="Hamm D.M."/>
            <person name="Collins F.H."/>
        </authorList>
    </citation>
    <scope>NUCLEOTIDE SEQUENCE [LARGE SCALE GENOMIC DNA]</scope>
    <source>
        <strain>G3</strain>
    </source>
</reference>
<sequence>MSTHANHPFHLVDYSPWPLTGAIGAMTTVSGLVQWFHQYTMTLFILGNVITILTMYQWWRDISREGTFQGLHTFPVTIGLRWGMILFIVSEVFFFISFFWAFFHSSLSPTIELGMTWPPVGIAAFNPFQIPLLNTAILLASGVTVTWAHHALMEGNHSQATQGLFFTIVLGVYFTILQAYEYIEAPFTIADAVYGSTFYMATGFHGLHVLIGTTFLLICFLRHINYHFSKNHHFGFEAAAWYWHFVDVVWLFLYITIYWWGS</sequence>
<evidence type="ECO:0000250" key="1">
    <source>
        <dbReference type="UniProtKB" id="P00420"/>
    </source>
</evidence>
<evidence type="ECO:0000255" key="2"/>
<evidence type="ECO:0000305" key="3"/>
<comment type="function">
    <text evidence="1">Component of the cytochrome c oxidase, the last enzyme in the mitochondrial electron transport chain which drives oxidative phosphorylation. The respiratory chain contains 3 multisubunit complexes succinate dehydrogenase (complex II, CII), ubiquinol-cytochrome c oxidoreductase (cytochrome b-c1 complex, complex III, CIII) and cytochrome c oxidase (complex IV, CIV), that cooperate to transfer electrons derived from NADH and succinate to molecular oxygen, creating an electrochemical gradient over the inner membrane that drives transmembrane transport and the ATP synthase. Cytochrome c oxidase is the component of the respiratory chain that catalyzes the reduction of oxygen to water. Electrons originating from reduced cytochrome c in the intermembrane space (IMS) are transferred via the dinuclear copper A center (CU(A)) of subunit 2 and heme A of subunit 1 to the active site in subunit 1, a binuclear center (BNC) formed by heme A3 and copper B (CU(B)). The BNC reduces molecular oxygen to 2 water molecules using 4 electrons from cytochrome c in the IMS and 4 protons from the mitochondrial matrix.</text>
</comment>
<comment type="catalytic activity">
    <reaction evidence="1">
        <text>4 Fe(II)-[cytochrome c] + O2 + 8 H(+)(in) = 4 Fe(III)-[cytochrome c] + 2 H2O + 4 H(+)(out)</text>
        <dbReference type="Rhea" id="RHEA:11436"/>
        <dbReference type="Rhea" id="RHEA-COMP:10350"/>
        <dbReference type="Rhea" id="RHEA-COMP:14399"/>
        <dbReference type="ChEBI" id="CHEBI:15377"/>
        <dbReference type="ChEBI" id="CHEBI:15378"/>
        <dbReference type="ChEBI" id="CHEBI:15379"/>
        <dbReference type="ChEBI" id="CHEBI:29033"/>
        <dbReference type="ChEBI" id="CHEBI:29034"/>
        <dbReference type="EC" id="7.1.1.9"/>
    </reaction>
    <physiologicalReaction direction="left-to-right" evidence="1">
        <dbReference type="Rhea" id="RHEA:11437"/>
    </physiologicalReaction>
</comment>
<comment type="subunit">
    <text evidence="1">Component of the cytochrome c oxidase (complex IV, CIV), a multisubunit enzyme composed of a catalytic core of 3 subunits and several supernumerary subunits. The complex exists as a monomer or a dimer and forms supercomplexes (SCs) in the inner mitochondrial membrane with ubiquinol-cytochrome c oxidoreductase (cytochrome b-c1 complex, complex III, CIII).</text>
</comment>
<comment type="subcellular location">
    <subcellularLocation>
        <location evidence="1">Mitochondrion inner membrane</location>
        <topology evidence="1">Multi-pass membrane protein</topology>
    </subcellularLocation>
</comment>
<comment type="similarity">
    <text evidence="3">Belongs to the cytochrome c oxidase subunit 3 family.</text>
</comment>
<gene>
    <name type="primary">COIII</name>
</gene>
<geneLocation type="mitochondrion"/>